<evidence type="ECO:0000250" key="1">
    <source>
        <dbReference type="UniProtKB" id="Q92598"/>
    </source>
</evidence>
<evidence type="ECO:0000256" key="2">
    <source>
        <dbReference type="SAM" id="MobiDB-lite"/>
    </source>
</evidence>
<evidence type="ECO:0000269" key="3">
    <source>
    </source>
</evidence>
<evidence type="ECO:0000269" key="4">
    <source>
    </source>
</evidence>
<evidence type="ECO:0000269" key="5">
    <source>
    </source>
</evidence>
<evidence type="ECO:0000269" key="6">
    <source>
    </source>
</evidence>
<evidence type="ECO:0000269" key="7">
    <source>
    </source>
</evidence>
<evidence type="ECO:0000269" key="8">
    <source>
    </source>
</evidence>
<evidence type="ECO:0000269" key="9">
    <source>
    </source>
</evidence>
<evidence type="ECO:0000269" key="10">
    <source>
    </source>
</evidence>
<evidence type="ECO:0000303" key="11">
    <source>
    </source>
</evidence>
<evidence type="ECO:0000305" key="12"/>
<evidence type="ECO:0000305" key="13">
    <source>
    </source>
</evidence>
<evidence type="ECO:0007744" key="14">
    <source>
    </source>
</evidence>
<evidence type="ECO:0007744" key="15">
    <source>
    </source>
</evidence>
<evidence type="ECO:0007744" key="16">
    <source>
    </source>
</evidence>
<evidence type="ECO:0007744" key="17">
    <source>
    </source>
</evidence>
<evidence type="ECO:0007744" key="18">
    <source>
    </source>
</evidence>
<accession>Q61699</accession>
<accession>Q3TNS2</accession>
<accession>Q3UIY8</accession>
<accession>Q62578</accession>
<accession>Q62579</accession>
<accession>Q6A0A5</accession>
<accession>Q8C430</accession>
<accession>Q8VCW6</accession>
<name>HS105_MOUSE</name>
<organism>
    <name type="scientific">Mus musculus</name>
    <name type="common">Mouse</name>
    <dbReference type="NCBI Taxonomy" id="10090"/>
    <lineage>
        <taxon>Eukaryota</taxon>
        <taxon>Metazoa</taxon>
        <taxon>Chordata</taxon>
        <taxon>Craniata</taxon>
        <taxon>Vertebrata</taxon>
        <taxon>Euteleostomi</taxon>
        <taxon>Mammalia</taxon>
        <taxon>Eutheria</taxon>
        <taxon>Euarchontoglires</taxon>
        <taxon>Glires</taxon>
        <taxon>Rodentia</taxon>
        <taxon>Myomorpha</taxon>
        <taxon>Muroidea</taxon>
        <taxon>Muridae</taxon>
        <taxon>Murinae</taxon>
        <taxon>Mus</taxon>
        <taxon>Mus</taxon>
    </lineage>
</organism>
<protein>
    <recommendedName>
        <fullName>Heat shock protein 105 kDa</fullName>
    </recommendedName>
    <alternativeName>
        <fullName>42 degrees C-HSP</fullName>
    </alternativeName>
    <alternativeName>
        <fullName>Heat shock 110 kDa protein</fullName>
    </alternativeName>
    <alternativeName>
        <fullName>Heat shock-related 100 kDa protein E7I</fullName>
        <shortName>HSP-E7I</shortName>
    </alternativeName>
</protein>
<proteinExistence type="evidence at protein level"/>
<feature type="initiator methionine" description="Removed" evidence="1">
    <location>
        <position position="1"/>
    </location>
</feature>
<feature type="chain" id="PRO_0000078285" description="Heat shock protein 105 kDa">
    <location>
        <begin position="2"/>
        <end position="858"/>
    </location>
</feature>
<feature type="region of interest" description="Disordered" evidence="2">
    <location>
        <begin position="500"/>
        <end position="585"/>
    </location>
</feature>
<feature type="region of interest" description="Disordered" evidence="2">
    <location>
        <begin position="801"/>
        <end position="858"/>
    </location>
</feature>
<feature type="compositionally biased region" description="Acidic residues" evidence="2">
    <location>
        <begin position="504"/>
        <end position="515"/>
    </location>
</feature>
<feature type="compositionally biased region" description="Polar residues" evidence="2">
    <location>
        <begin position="533"/>
        <end position="549"/>
    </location>
</feature>
<feature type="compositionally biased region" description="Basic and acidic residues" evidence="2">
    <location>
        <begin position="564"/>
        <end position="585"/>
    </location>
</feature>
<feature type="compositionally biased region" description="Basic and acidic residues" evidence="2">
    <location>
        <begin position="806"/>
        <end position="815"/>
    </location>
</feature>
<feature type="modified residue" description="N-acetylserine" evidence="1">
    <location>
        <position position="2"/>
    </location>
</feature>
<feature type="modified residue" description="N6-acetyllysine" evidence="18">
    <location>
        <position position="471"/>
    </location>
</feature>
<feature type="modified residue" description="Phosphoserine" evidence="5 17">
    <location>
        <position position="509"/>
    </location>
</feature>
<feature type="modified residue" description="Phosphoserine" evidence="17">
    <location>
        <position position="510"/>
    </location>
</feature>
<feature type="modified residue" description="Phosphoserine" evidence="14">
    <location>
        <position position="558"/>
    </location>
</feature>
<feature type="modified residue" description="Phosphothreonine" evidence="1">
    <location>
        <position position="562"/>
    </location>
</feature>
<feature type="modified residue" description="Phosphoserine" evidence="15 16">
    <location>
        <position position="810"/>
    </location>
</feature>
<feature type="modified residue" description="Phosphothreonine" evidence="1">
    <location>
        <position position="816"/>
    </location>
</feature>
<feature type="splice variant" id="VSP_002429" description="In isoform HSP105-beta." evidence="11">
    <location>
        <begin position="530"/>
        <end position="573"/>
    </location>
</feature>
<feature type="sequence conflict" description="In Ref. 4; BAC38797." evidence="12" ref="4">
    <original>S</original>
    <variation>L</variation>
    <location>
        <position position="2"/>
    </location>
</feature>
<feature type="sequence conflict" description="In Ref. 1; AAA99485." evidence="12" ref="1">
    <original>DV</original>
    <variation>EL</variation>
    <location>
        <begin position="7"/>
        <end position="8"/>
    </location>
</feature>
<feature type="sequence conflict" description="In Ref. 4; BAC38797." evidence="12" ref="4">
    <original>D</original>
    <variation>N</variation>
    <location>
        <position position="7"/>
    </location>
</feature>
<feature type="sequence conflict" description="In Ref. 4; BAC38797." evidence="12" ref="4">
    <original>S</original>
    <variation>R</variation>
    <location>
        <position position="12"/>
    </location>
</feature>
<feature type="sequence conflict" description="In Ref. 4; BAC38797." evidence="12" ref="4">
    <original>AVAR</original>
    <variation>VGEG</variation>
    <location>
        <begin position="16"/>
        <end position="19"/>
    </location>
</feature>
<feature type="sequence conflict" description="In Ref. 4; BAC38797." evidence="12" ref="4">
    <original>E</original>
    <variation>D</variation>
    <location>
        <position position="24"/>
    </location>
</feature>
<feature type="sequence conflict" description="In Ref. 4; BAC38797." evidence="12" ref="4">
    <original>NE</original>
    <variation>KD</variation>
    <location>
        <begin position="28"/>
        <end position="29"/>
    </location>
</feature>
<feature type="sequence conflict" description="In Ref. 1; AAA99485 and 2; BAA11036." evidence="12" ref="1 2">
    <original>A</original>
    <variation>R</variation>
    <location>
        <position position="159"/>
    </location>
</feature>
<feature type="sequence conflict" description="In Ref. 4; BAE38016." evidence="12" ref="4">
    <original>C</original>
    <variation>S</variation>
    <location>
        <position position="310"/>
    </location>
</feature>
<feature type="sequence conflict" description="In Ref. 2; BAA11036." evidence="12" ref="2">
    <original>P</original>
    <variation>L</variation>
    <location>
        <position position="320"/>
    </location>
</feature>
<feature type="sequence conflict" description="In Ref. 1; AAA99485." evidence="12" ref="1">
    <original>A</original>
    <variation>R</variation>
    <location>
        <position position="373"/>
    </location>
</feature>
<feature type="sequence conflict" description="In Ref. 1; AAA99485." evidence="12" ref="1">
    <original>P</original>
    <variation>FQ</variation>
    <location>
        <position position="518"/>
    </location>
</feature>
<feature type="sequence conflict" description="In Ref. 4; BAE27367." evidence="12" ref="4">
    <original>I</original>
    <variation>R</variation>
    <location>
        <position position="658"/>
    </location>
</feature>
<feature type="sequence conflict" description="In Ref. 1; AAA99485." evidence="12" ref="1">
    <original>I</original>
    <variation>N</variation>
    <location>
        <position position="744"/>
    </location>
</feature>
<feature type="sequence conflict" description="In Ref. 1; AAA99485." evidence="12" ref="1">
    <original>A</original>
    <variation>R</variation>
    <location>
        <position position="838"/>
    </location>
</feature>
<dbReference type="EMBL" id="L40406">
    <property type="protein sequence ID" value="AAA99485.1"/>
    <property type="molecule type" value="mRNA"/>
</dbReference>
<dbReference type="EMBL" id="D67016">
    <property type="protein sequence ID" value="BAA11035.1"/>
    <property type="molecule type" value="mRNA"/>
</dbReference>
<dbReference type="EMBL" id="D67017">
    <property type="protein sequence ID" value="BAA11036.1"/>
    <property type="molecule type" value="mRNA"/>
</dbReference>
<dbReference type="EMBL" id="AB005282">
    <property type="protein sequence ID" value="BAA74540.1"/>
    <property type="molecule type" value="Genomic_DNA"/>
</dbReference>
<dbReference type="EMBL" id="AK083179">
    <property type="protein sequence ID" value="BAC38797.1"/>
    <property type="molecule type" value="mRNA"/>
</dbReference>
<dbReference type="EMBL" id="AK146697">
    <property type="protein sequence ID" value="BAE27367.1"/>
    <property type="molecule type" value="mRNA"/>
</dbReference>
<dbReference type="EMBL" id="AK165046">
    <property type="protein sequence ID" value="BAE38016.1"/>
    <property type="molecule type" value="mRNA"/>
</dbReference>
<dbReference type="EMBL" id="BC018378">
    <property type="protein sequence ID" value="AAH18378.1"/>
    <property type="molecule type" value="mRNA"/>
</dbReference>
<dbReference type="EMBL" id="AK172913">
    <property type="protein sequence ID" value="BAD32191.1"/>
    <property type="molecule type" value="mRNA"/>
</dbReference>
<dbReference type="CCDS" id="CCDS19885.1">
    <molecule id="Q61699-1"/>
</dbReference>
<dbReference type="CCDS" id="CCDS85010.1">
    <molecule id="Q61699-2"/>
</dbReference>
<dbReference type="PIR" id="S66666">
    <property type="entry name" value="S66666"/>
</dbReference>
<dbReference type="RefSeq" id="NP_001334463.1">
    <molecule id="Q61699-2"/>
    <property type="nucleotide sequence ID" value="NM_001347534.1"/>
</dbReference>
<dbReference type="RefSeq" id="NP_038587.2">
    <molecule id="Q61699-1"/>
    <property type="nucleotide sequence ID" value="NM_013559.2"/>
</dbReference>
<dbReference type="SMR" id="Q61699"/>
<dbReference type="BioGRID" id="200448">
    <property type="interactions" value="56"/>
</dbReference>
<dbReference type="CORUM" id="Q61699"/>
<dbReference type="DIP" id="DIP-32354N"/>
<dbReference type="FunCoup" id="Q61699">
    <property type="interactions" value="3994"/>
</dbReference>
<dbReference type="IntAct" id="Q61699">
    <property type="interactions" value="28"/>
</dbReference>
<dbReference type="MINT" id="Q61699"/>
<dbReference type="STRING" id="10090.ENSMUSP00000144413"/>
<dbReference type="GlyGen" id="Q61699">
    <property type="glycosylation" value="3 sites, 2 N-linked glycans (2 sites), 1 O-linked glycan (1 site)"/>
</dbReference>
<dbReference type="iPTMnet" id="Q61699"/>
<dbReference type="PhosphoSitePlus" id="Q61699"/>
<dbReference type="SwissPalm" id="Q61699"/>
<dbReference type="jPOST" id="Q61699"/>
<dbReference type="PaxDb" id="10090-ENSMUSP00000074392"/>
<dbReference type="PeptideAtlas" id="Q61699"/>
<dbReference type="ProteomicsDB" id="273137">
    <molecule id="Q61699-1"/>
</dbReference>
<dbReference type="ProteomicsDB" id="273138">
    <molecule id="Q61699-2"/>
</dbReference>
<dbReference type="Pumba" id="Q61699"/>
<dbReference type="Antibodypedia" id="22778">
    <property type="antibodies" value="527 antibodies from 39 providers"/>
</dbReference>
<dbReference type="DNASU" id="15505"/>
<dbReference type="Ensembl" id="ENSMUST00000074846.14">
    <molecule id="Q61699-2"/>
    <property type="protein sequence ID" value="ENSMUSP00000074392.9"/>
    <property type="gene ID" value="ENSMUSG00000029657.16"/>
</dbReference>
<dbReference type="Ensembl" id="ENSMUST00000201452.4">
    <molecule id="Q61699-1"/>
    <property type="protein sequence ID" value="ENSMUSP00000144654.2"/>
    <property type="gene ID" value="ENSMUSG00000029657.16"/>
</dbReference>
<dbReference type="Ensembl" id="ENSMUST00000202361.4">
    <molecule id="Q61699-1"/>
    <property type="protein sequence ID" value="ENSMUSP00000144413.2"/>
    <property type="gene ID" value="ENSMUSG00000029657.16"/>
</dbReference>
<dbReference type="GeneID" id="15505"/>
<dbReference type="KEGG" id="mmu:15505"/>
<dbReference type="UCSC" id="uc009apy.1">
    <molecule id="Q61699-1"/>
    <property type="organism name" value="mouse"/>
</dbReference>
<dbReference type="UCSC" id="uc009apz.1">
    <molecule id="Q61699-2"/>
    <property type="organism name" value="mouse"/>
</dbReference>
<dbReference type="AGR" id="MGI:105053"/>
<dbReference type="CTD" id="10808"/>
<dbReference type="MGI" id="MGI:105053">
    <property type="gene designation" value="Hsph1"/>
</dbReference>
<dbReference type="VEuPathDB" id="HostDB:ENSMUSG00000029657"/>
<dbReference type="eggNOG" id="KOG0103">
    <property type="taxonomic scope" value="Eukaryota"/>
</dbReference>
<dbReference type="GeneTree" id="ENSGT00940000159635"/>
<dbReference type="HOGENOM" id="CLU_005965_5_1_1"/>
<dbReference type="InParanoid" id="Q61699"/>
<dbReference type="OMA" id="APVHIEC"/>
<dbReference type="OrthoDB" id="434160at2759"/>
<dbReference type="PhylomeDB" id="Q61699"/>
<dbReference type="TreeFam" id="TF105043"/>
<dbReference type="Reactome" id="R-MMU-3371453">
    <property type="pathway name" value="Regulation of HSF1-mediated heat shock response"/>
</dbReference>
<dbReference type="BioGRID-ORCS" id="15505">
    <property type="hits" value="2 hits in 80 CRISPR screens"/>
</dbReference>
<dbReference type="CD-CODE" id="CE726F99">
    <property type="entry name" value="Postsynaptic density"/>
</dbReference>
<dbReference type="ChiTaRS" id="Hsph1">
    <property type="organism name" value="mouse"/>
</dbReference>
<dbReference type="PRO" id="PR:Q61699"/>
<dbReference type="Proteomes" id="UP000000589">
    <property type="component" value="Chromosome 5"/>
</dbReference>
<dbReference type="RNAct" id="Q61699">
    <property type="molecule type" value="protein"/>
</dbReference>
<dbReference type="Bgee" id="ENSMUSG00000029657">
    <property type="expression patterns" value="Expressed in embryonic post-anal tail and 266 other cell types or tissues"/>
</dbReference>
<dbReference type="ExpressionAtlas" id="Q61699">
    <property type="expression patterns" value="baseline and differential"/>
</dbReference>
<dbReference type="GO" id="GO:0005737">
    <property type="term" value="C:cytoplasm"/>
    <property type="evidence" value="ECO:0000314"/>
    <property type="project" value="MGI"/>
</dbReference>
<dbReference type="GO" id="GO:0005829">
    <property type="term" value="C:cytosol"/>
    <property type="evidence" value="ECO:0007669"/>
    <property type="project" value="Ensembl"/>
</dbReference>
<dbReference type="GO" id="GO:0005576">
    <property type="term" value="C:extracellular region"/>
    <property type="evidence" value="ECO:0000304"/>
    <property type="project" value="BHF-UCL"/>
</dbReference>
<dbReference type="GO" id="GO:0005654">
    <property type="term" value="C:nucleoplasm"/>
    <property type="evidence" value="ECO:0007669"/>
    <property type="project" value="Ensembl"/>
</dbReference>
<dbReference type="GO" id="GO:0005634">
    <property type="term" value="C:nucleus"/>
    <property type="evidence" value="ECO:0000314"/>
    <property type="project" value="MGI"/>
</dbReference>
<dbReference type="GO" id="GO:0032991">
    <property type="term" value="C:protein-containing complex"/>
    <property type="evidence" value="ECO:0007669"/>
    <property type="project" value="Ensembl"/>
</dbReference>
<dbReference type="GO" id="GO:0000774">
    <property type="term" value="F:adenyl-nucleotide exchange factor activity"/>
    <property type="evidence" value="ECO:0000250"/>
    <property type="project" value="UniProtKB"/>
</dbReference>
<dbReference type="GO" id="GO:0043014">
    <property type="term" value="F:alpha-tubulin binding"/>
    <property type="evidence" value="ECO:0000314"/>
    <property type="project" value="BHF-UCL"/>
</dbReference>
<dbReference type="GO" id="GO:0005524">
    <property type="term" value="F:ATP binding"/>
    <property type="evidence" value="ECO:0007669"/>
    <property type="project" value="UniProtKB-KW"/>
</dbReference>
<dbReference type="GO" id="GO:0140662">
    <property type="term" value="F:ATP-dependent protein folding chaperone"/>
    <property type="evidence" value="ECO:0007669"/>
    <property type="project" value="InterPro"/>
</dbReference>
<dbReference type="GO" id="GO:0051085">
    <property type="term" value="P:chaperone cofactor-dependent protein refolding"/>
    <property type="evidence" value="ECO:0000314"/>
    <property type="project" value="MGI"/>
</dbReference>
<dbReference type="GO" id="GO:2001234">
    <property type="term" value="P:negative regulation of apoptotic signaling pathway"/>
    <property type="evidence" value="ECO:0000315"/>
    <property type="project" value="MGI"/>
</dbReference>
<dbReference type="GO" id="GO:1903748">
    <property type="term" value="P:negative regulation of establishment of protein localization to mitochondrion"/>
    <property type="evidence" value="ECO:0000315"/>
    <property type="project" value="MGI"/>
</dbReference>
<dbReference type="GO" id="GO:1903751">
    <property type="term" value="P:negative regulation of intrinsic apoptotic signaling pathway in response to hydrogen peroxide"/>
    <property type="evidence" value="ECO:0000315"/>
    <property type="project" value="MGI"/>
</dbReference>
<dbReference type="GO" id="GO:0043524">
    <property type="term" value="P:negative regulation of neuron apoptotic process"/>
    <property type="evidence" value="ECO:0000304"/>
    <property type="project" value="BHF-UCL"/>
</dbReference>
<dbReference type="GO" id="GO:1903753">
    <property type="term" value="P:negative regulation of p38MAPK cascade"/>
    <property type="evidence" value="ECO:0000316"/>
    <property type="project" value="MGI"/>
</dbReference>
<dbReference type="GO" id="GO:0045345">
    <property type="term" value="P:positive regulation of MHC class I biosynthetic process"/>
    <property type="evidence" value="ECO:0000304"/>
    <property type="project" value="BHF-UCL"/>
</dbReference>
<dbReference type="GO" id="GO:0051135">
    <property type="term" value="P:positive regulation of NK T cell activation"/>
    <property type="evidence" value="ECO:0000304"/>
    <property type="project" value="BHF-UCL"/>
</dbReference>
<dbReference type="GO" id="GO:0045944">
    <property type="term" value="P:positive regulation of transcription by RNA polymerase II"/>
    <property type="evidence" value="ECO:0000314"/>
    <property type="project" value="MGI"/>
</dbReference>
<dbReference type="GO" id="GO:0070507">
    <property type="term" value="P:regulation of microtubule cytoskeleton organization"/>
    <property type="evidence" value="ECO:0000303"/>
    <property type="project" value="BHF-UCL"/>
</dbReference>
<dbReference type="GO" id="GO:0006986">
    <property type="term" value="P:response to unfolded protein"/>
    <property type="evidence" value="ECO:0000304"/>
    <property type="project" value="BHF-UCL"/>
</dbReference>
<dbReference type="GO" id="GO:0006366">
    <property type="term" value="P:transcription by RNA polymerase II"/>
    <property type="evidence" value="ECO:0000314"/>
    <property type="project" value="MGI"/>
</dbReference>
<dbReference type="CDD" id="cd11739">
    <property type="entry name" value="ASKHA_NBD_HSP70_HSPH1"/>
    <property type="match status" value="1"/>
</dbReference>
<dbReference type="FunFam" id="1.20.1270.10:FF:000002">
    <property type="entry name" value="Heat shock 70 kDa protein 4"/>
    <property type="match status" value="1"/>
</dbReference>
<dbReference type="FunFam" id="3.30.30.30:FF:000002">
    <property type="entry name" value="Heat shock 70 kDa protein 4"/>
    <property type="match status" value="1"/>
</dbReference>
<dbReference type="FunFam" id="3.30.420.40:FF:000171">
    <property type="entry name" value="Heat shock 70 kDa protein 4"/>
    <property type="match status" value="1"/>
</dbReference>
<dbReference type="FunFam" id="3.90.640.10:FF:000004">
    <property type="entry name" value="Heat shock 70 kDa protein 4"/>
    <property type="match status" value="1"/>
</dbReference>
<dbReference type="FunFam" id="3.30.420.40:FF:000243">
    <property type="entry name" value="Heat shock protein 105 kDa"/>
    <property type="match status" value="1"/>
</dbReference>
<dbReference type="FunFam" id="1.20.1270.10:FF:000012">
    <property type="entry name" value="Heat shock protein 105 kDa isoform 1"/>
    <property type="match status" value="1"/>
</dbReference>
<dbReference type="FunFam" id="2.60.34.10:FF:000007">
    <property type="entry name" value="Heat shock protein 105 kDa isoform 1"/>
    <property type="match status" value="1"/>
</dbReference>
<dbReference type="FunFam" id="3.30.420.40:FF:000495">
    <property type="entry name" value="Heat shock protein 4b"/>
    <property type="match status" value="1"/>
</dbReference>
<dbReference type="FunFam" id="3.30.420.40:FF:000767">
    <property type="entry name" value="Heat shock protein 70 (HSP70)-4, putative"/>
    <property type="match status" value="1"/>
</dbReference>
<dbReference type="Gene3D" id="1.20.1270.10">
    <property type="match status" value="2"/>
</dbReference>
<dbReference type="Gene3D" id="3.30.30.30">
    <property type="match status" value="1"/>
</dbReference>
<dbReference type="Gene3D" id="3.30.420.40">
    <property type="match status" value="2"/>
</dbReference>
<dbReference type="Gene3D" id="3.90.640.10">
    <property type="entry name" value="Actin, Chain A, domain 4"/>
    <property type="match status" value="1"/>
</dbReference>
<dbReference type="Gene3D" id="2.60.34.10">
    <property type="entry name" value="Substrate Binding Domain Of DNAk, Chain A, domain 1"/>
    <property type="match status" value="1"/>
</dbReference>
<dbReference type="InterPro" id="IPR043129">
    <property type="entry name" value="ATPase_NBD"/>
</dbReference>
<dbReference type="InterPro" id="IPR018181">
    <property type="entry name" value="Heat_shock_70_CS"/>
</dbReference>
<dbReference type="InterPro" id="IPR029048">
    <property type="entry name" value="HSP70_C_sf"/>
</dbReference>
<dbReference type="InterPro" id="IPR029047">
    <property type="entry name" value="HSP70_peptide-bd_sf"/>
</dbReference>
<dbReference type="InterPro" id="IPR013126">
    <property type="entry name" value="Hsp_70_fam"/>
</dbReference>
<dbReference type="InterPro" id="IPR042053">
    <property type="entry name" value="HSPH1_NBD"/>
</dbReference>
<dbReference type="PANTHER" id="PTHR45639:SF2">
    <property type="entry name" value="HEAT SHOCK PROTEIN 105 KDA"/>
    <property type="match status" value="1"/>
</dbReference>
<dbReference type="PANTHER" id="PTHR45639">
    <property type="entry name" value="HSC70CB, ISOFORM G-RELATED"/>
    <property type="match status" value="1"/>
</dbReference>
<dbReference type="Pfam" id="PF00012">
    <property type="entry name" value="HSP70"/>
    <property type="match status" value="1"/>
</dbReference>
<dbReference type="PRINTS" id="PR00301">
    <property type="entry name" value="HEATSHOCK70"/>
</dbReference>
<dbReference type="SUPFAM" id="SSF53067">
    <property type="entry name" value="Actin-like ATPase domain"/>
    <property type="match status" value="2"/>
</dbReference>
<dbReference type="SUPFAM" id="SSF100934">
    <property type="entry name" value="Heat shock protein 70kD (HSP70), C-terminal subdomain"/>
    <property type="match status" value="2"/>
</dbReference>
<dbReference type="SUPFAM" id="SSF100920">
    <property type="entry name" value="Heat shock protein 70kD (HSP70), peptide-binding domain"/>
    <property type="match status" value="1"/>
</dbReference>
<dbReference type="PROSITE" id="PS01036">
    <property type="entry name" value="HSP70_3"/>
    <property type="match status" value="1"/>
</dbReference>
<keyword id="KW-0007">Acetylation</keyword>
<keyword id="KW-0025">Alternative splicing</keyword>
<keyword id="KW-0067">ATP-binding</keyword>
<keyword id="KW-0963">Cytoplasm</keyword>
<keyword id="KW-0903">Direct protein sequencing</keyword>
<keyword id="KW-0547">Nucleotide-binding</keyword>
<keyword id="KW-0539">Nucleus</keyword>
<keyword id="KW-0597">Phosphoprotein</keyword>
<keyword id="KW-1185">Reference proteome</keyword>
<keyword id="KW-0346">Stress response</keyword>
<comment type="function">
    <text evidence="1 6 7">Acts as a nucleotide-exchange factor (NEF) for chaperone proteins HSPA1A and HSPA1B, promoting the release of ADP from HSPA1A/B thereby triggering client/substrate protein release (By similarity). Prevents the aggregation of denatured proteins in cells under severe stress, on which the ATP levels decrease markedly. Inhibits HSPA8/HSC70 ATPase and chaperone activities (PubMed:14644449, PubMed:15292236).</text>
</comment>
<comment type="subunit">
    <text evidence="1 7 10">Interacts with HSPA8/HSC70 (PubMed:15292236, PubMed:9675148). Interacts with HSPA1A (via NBD) and HSPA1B (via NBD) (By similarity).</text>
</comment>
<comment type="subcellular location">
    <subcellularLocation>
        <location evidence="4">Cytoplasm</location>
    </subcellularLocation>
    <subcellularLocation>
        <location evidence="4">Nucleus</location>
    </subcellularLocation>
    <text>Strictly cytoplasmic in neurons.</text>
</comment>
<comment type="alternative products">
    <event type="alternative splicing"/>
    <isoform>
        <id>Q61699-1</id>
        <name>HSP105-alpha</name>
        <sequence type="displayed"/>
    </isoform>
    <isoform>
        <id>Q61699-2</id>
        <name>HSP105-beta</name>
        <sequence type="described" ref="VSP_002429"/>
    </isoform>
</comment>
<comment type="tissue specificity">
    <text evidence="4 8 9">Expressed in neurons in the cerebrum and Purkinje cells in the cerebellum (at protein level) (PubMed:10865058, PubMed:16232202). Expressed in testis and no expression or only low-level expression in liver, spleen, lung, and kidney (at protein level) (PubMed:16232202). Highly expressed in the brain and moderately expressed in lung, heart, thymus, spleen, liver, and small intestine (PubMed:8530361).</text>
</comment>
<comment type="induction">
    <text evidence="9">By heat shock.</text>
</comment>
<comment type="induction">
    <molecule>Isoform HSP105-alpha</molecule>
    <text evidence="9">Up-regulated by stresses such as treatment with arsenite or amino acid analogs.</text>
</comment>
<comment type="PTM">
    <text evidence="3 5">Phosphorylation on Ser-509 may be important for regulation of the HSPA8/HSC70 chaperone activity.</text>
</comment>
<comment type="miscellaneous">
    <text evidence="8 9 13">There is sufficient sequence similarity to other members of the heat shock protein 70 family that some polyclonal antibodies raised against the HSPH1 protein may recognize other epitopes and so expression studies should be interpreted with caution (Probable). Some papers report high level expression in testis (at protein level) (PubMed:16232202). However, others do not detect expression in testis (at transcript level) (PubMed:8530361).</text>
</comment>
<comment type="similarity">
    <text evidence="12">Belongs to the heat shock protein 70 family.</text>
</comment>
<sequence>MSVVGLDVGSQSCYIAVARAGGIETIANEFSDRCTPSVISFGSKNRTIGVAAKNQQITHANNTVSSFKRFHGRAFNDPFIQKEKENLSYDLVPMKNGGVGIKVMYMDEEHFFSVEQITAMLLTKLKETAENNLKKPVTDCVISVPSFFTDAERRSVLDAAQIVGLNCLRLMNDMTAVALNYGIYKQDLPNAEEKPRVVVFVDMGHSSFQVSACAFNKGKLKVLGTAFDPFLGGKNFDEKLVEHFCAEFKTKYKLDAKSKIRALLRLHQECEKLKKLMSSNSTDLPLNIECFMNDKDVSGKMNRSQFEELCAELLQKIEVPLHSLMAQTQLKAEDVSAIEIVGGATRIPAVKERIAKFFGKDVSTTLNADEAVARGCALQCAILSPAFKVREFSVTDAVPFPISLVWNHDSEETEGVHEVFSRNHAAPFSKVLTFLRRGPFELEAFYSDPQGVPYPEAKIGRFVVQNVSAQKDGEKSRVKVKVRVNTHGIFTISTASMVEKVPTEEEDGSSLEADMECPNQRPTESSDVDKNIQQDNSEAGTQPQVQTDGQQTSQSPPSPELTSEESKTPDADKANEKKVDQPPEAKKPKIKVVNVELPVEANLVWQLGRDLLNMYIETEGKMIMQDKLEKERNDAKNAVEECVYEFRDKLCGPYEKFICEQEHEKFLRLLTETEDWLYEEGEDQAKQAYIDKLEELMKMGTPVKVRFQEAEERPKVLEELGQRLQHYAKIAADFRGKDEKYNHIDESEMKKVEKSVNEVMEWMNNVMNAQAKRSLDQDPVVRTHEIRAKVKELNNVCEPVVTQPKPKIESPKLERTPNGPNIDKKEDLEGKNNLGAEAPHQNGECHPNEKGSVNMDLD</sequence>
<reference key="1">
    <citation type="journal article" date="1995" name="FEBS Lett.">
        <title>HPV16 E7 oncoprotein induces expression of a 110 kDa heat shock protein.</title>
        <authorList>
            <person name="Morozov A."/>
            <person name="Subjeck J."/>
            <person name="Raychaudhuri P."/>
        </authorList>
    </citation>
    <scope>NUCLEOTIDE SEQUENCE [MRNA] (ISOFORM HSP105-ALPHA)</scope>
</reference>
<reference key="2">
    <citation type="journal article" date="1995" name="J. Biol. Chem.">
        <title>Cloning and expression of murine high molecular mass heat shock proteins, HSP105.</title>
        <authorList>
            <person name="Yasuda K."/>
            <person name="Nakai A."/>
            <person name="Hatayama T."/>
            <person name="Nagata K."/>
        </authorList>
    </citation>
    <scope>NUCLEOTIDE SEQUENCE [MRNA] (ISOFORMS HSP105-ALPHA AND HSP105-BETA)</scope>
    <scope>TISSUE SPECIFICITY</scope>
    <scope>INDUCTION BY HEAT-SHOCK</scope>
</reference>
<reference key="3">
    <citation type="journal article" date="1999" name="Biochem. Biophys. Res. Commun.">
        <title>Genomic cloning and promoter analysis of the mouse 105-kDa heat shock protein (HSP105) gene.</title>
        <authorList>
            <person name="Yasuda K."/>
            <person name="Ishihara K."/>
            <person name="Nakashima K."/>
            <person name="Hatayama T."/>
        </authorList>
    </citation>
    <scope>NUCLEOTIDE SEQUENCE [GENOMIC DNA]</scope>
    <scope>ALTERNATIVE SPLICING (ISOFORM HSP105-ALPHA)</scope>
    <source>
        <strain>BALB/cJ</strain>
    </source>
</reference>
<reference key="4">
    <citation type="journal article" date="2005" name="Science">
        <title>The transcriptional landscape of the mammalian genome.</title>
        <authorList>
            <person name="Carninci P."/>
            <person name="Kasukawa T."/>
            <person name="Katayama S."/>
            <person name="Gough J."/>
            <person name="Frith M.C."/>
            <person name="Maeda N."/>
            <person name="Oyama R."/>
            <person name="Ravasi T."/>
            <person name="Lenhard B."/>
            <person name="Wells C."/>
            <person name="Kodzius R."/>
            <person name="Shimokawa K."/>
            <person name="Bajic V.B."/>
            <person name="Brenner S.E."/>
            <person name="Batalov S."/>
            <person name="Forrest A.R."/>
            <person name="Zavolan M."/>
            <person name="Davis M.J."/>
            <person name="Wilming L.G."/>
            <person name="Aidinis V."/>
            <person name="Allen J.E."/>
            <person name="Ambesi-Impiombato A."/>
            <person name="Apweiler R."/>
            <person name="Aturaliya R.N."/>
            <person name="Bailey T.L."/>
            <person name="Bansal M."/>
            <person name="Baxter L."/>
            <person name="Beisel K.W."/>
            <person name="Bersano T."/>
            <person name="Bono H."/>
            <person name="Chalk A.M."/>
            <person name="Chiu K.P."/>
            <person name="Choudhary V."/>
            <person name="Christoffels A."/>
            <person name="Clutterbuck D.R."/>
            <person name="Crowe M.L."/>
            <person name="Dalla E."/>
            <person name="Dalrymple B.P."/>
            <person name="de Bono B."/>
            <person name="Della Gatta G."/>
            <person name="di Bernardo D."/>
            <person name="Down T."/>
            <person name="Engstrom P."/>
            <person name="Fagiolini M."/>
            <person name="Faulkner G."/>
            <person name="Fletcher C.F."/>
            <person name="Fukushima T."/>
            <person name="Furuno M."/>
            <person name="Futaki S."/>
            <person name="Gariboldi M."/>
            <person name="Georgii-Hemming P."/>
            <person name="Gingeras T.R."/>
            <person name="Gojobori T."/>
            <person name="Green R.E."/>
            <person name="Gustincich S."/>
            <person name="Harbers M."/>
            <person name="Hayashi Y."/>
            <person name="Hensch T.K."/>
            <person name="Hirokawa N."/>
            <person name="Hill D."/>
            <person name="Huminiecki L."/>
            <person name="Iacono M."/>
            <person name="Ikeo K."/>
            <person name="Iwama A."/>
            <person name="Ishikawa T."/>
            <person name="Jakt M."/>
            <person name="Kanapin A."/>
            <person name="Katoh M."/>
            <person name="Kawasawa Y."/>
            <person name="Kelso J."/>
            <person name="Kitamura H."/>
            <person name="Kitano H."/>
            <person name="Kollias G."/>
            <person name="Krishnan S.P."/>
            <person name="Kruger A."/>
            <person name="Kummerfeld S.K."/>
            <person name="Kurochkin I.V."/>
            <person name="Lareau L.F."/>
            <person name="Lazarevic D."/>
            <person name="Lipovich L."/>
            <person name="Liu J."/>
            <person name="Liuni S."/>
            <person name="McWilliam S."/>
            <person name="Madan Babu M."/>
            <person name="Madera M."/>
            <person name="Marchionni L."/>
            <person name="Matsuda H."/>
            <person name="Matsuzawa S."/>
            <person name="Miki H."/>
            <person name="Mignone F."/>
            <person name="Miyake S."/>
            <person name="Morris K."/>
            <person name="Mottagui-Tabar S."/>
            <person name="Mulder N."/>
            <person name="Nakano N."/>
            <person name="Nakauchi H."/>
            <person name="Ng P."/>
            <person name="Nilsson R."/>
            <person name="Nishiguchi S."/>
            <person name="Nishikawa S."/>
            <person name="Nori F."/>
            <person name="Ohara O."/>
            <person name="Okazaki Y."/>
            <person name="Orlando V."/>
            <person name="Pang K.C."/>
            <person name="Pavan W.J."/>
            <person name="Pavesi G."/>
            <person name="Pesole G."/>
            <person name="Petrovsky N."/>
            <person name="Piazza S."/>
            <person name="Reed J."/>
            <person name="Reid J.F."/>
            <person name="Ring B.Z."/>
            <person name="Ringwald M."/>
            <person name="Rost B."/>
            <person name="Ruan Y."/>
            <person name="Salzberg S.L."/>
            <person name="Sandelin A."/>
            <person name="Schneider C."/>
            <person name="Schoenbach C."/>
            <person name="Sekiguchi K."/>
            <person name="Semple C.A."/>
            <person name="Seno S."/>
            <person name="Sessa L."/>
            <person name="Sheng Y."/>
            <person name="Shibata Y."/>
            <person name="Shimada H."/>
            <person name="Shimada K."/>
            <person name="Silva D."/>
            <person name="Sinclair B."/>
            <person name="Sperling S."/>
            <person name="Stupka E."/>
            <person name="Sugiura K."/>
            <person name="Sultana R."/>
            <person name="Takenaka Y."/>
            <person name="Taki K."/>
            <person name="Tammoja K."/>
            <person name="Tan S.L."/>
            <person name="Tang S."/>
            <person name="Taylor M.S."/>
            <person name="Tegner J."/>
            <person name="Teichmann S.A."/>
            <person name="Ueda H.R."/>
            <person name="van Nimwegen E."/>
            <person name="Verardo R."/>
            <person name="Wei C.L."/>
            <person name="Yagi K."/>
            <person name="Yamanishi H."/>
            <person name="Zabarovsky E."/>
            <person name="Zhu S."/>
            <person name="Zimmer A."/>
            <person name="Hide W."/>
            <person name="Bult C."/>
            <person name="Grimmond S.M."/>
            <person name="Teasdale R.D."/>
            <person name="Liu E.T."/>
            <person name="Brusic V."/>
            <person name="Quackenbush J."/>
            <person name="Wahlestedt C."/>
            <person name="Mattick J.S."/>
            <person name="Hume D.A."/>
            <person name="Kai C."/>
            <person name="Sasaki D."/>
            <person name="Tomaru Y."/>
            <person name="Fukuda S."/>
            <person name="Kanamori-Katayama M."/>
            <person name="Suzuki M."/>
            <person name="Aoki J."/>
            <person name="Arakawa T."/>
            <person name="Iida J."/>
            <person name="Imamura K."/>
            <person name="Itoh M."/>
            <person name="Kato T."/>
            <person name="Kawaji H."/>
            <person name="Kawagashira N."/>
            <person name="Kawashima T."/>
            <person name="Kojima M."/>
            <person name="Kondo S."/>
            <person name="Konno H."/>
            <person name="Nakano K."/>
            <person name="Ninomiya N."/>
            <person name="Nishio T."/>
            <person name="Okada M."/>
            <person name="Plessy C."/>
            <person name="Shibata K."/>
            <person name="Shiraki T."/>
            <person name="Suzuki S."/>
            <person name="Tagami M."/>
            <person name="Waki K."/>
            <person name="Watahiki A."/>
            <person name="Okamura-Oho Y."/>
            <person name="Suzuki H."/>
            <person name="Kawai J."/>
            <person name="Hayashizaki Y."/>
        </authorList>
    </citation>
    <scope>NUCLEOTIDE SEQUENCE [LARGE SCALE MRNA] (ISOFORM HSP105-ALPHA)</scope>
    <source>
        <strain>C57BL/6J</strain>
        <tissue>Eye</tissue>
        <tissue>Hippocampus</tissue>
        <tissue>Liver</tissue>
    </source>
</reference>
<reference key="5">
    <citation type="journal article" date="2004" name="Genome Res.">
        <title>The status, quality, and expansion of the NIH full-length cDNA project: the Mammalian Gene Collection (MGC).</title>
        <authorList>
            <consortium name="The MGC Project Team"/>
        </authorList>
    </citation>
    <scope>NUCLEOTIDE SEQUENCE [LARGE SCALE MRNA] (ISOFORM HSP105-ALPHA)</scope>
    <source>
        <strain>NMRI</strain>
        <tissue>Mammary gland</tissue>
    </source>
</reference>
<reference key="6">
    <citation type="submission" date="2009-01" db="UniProtKB">
        <authorList>
            <person name="Lubec G."/>
            <person name="Kang S.U."/>
            <person name="Sunyer B."/>
            <person name="Chen W.-Q."/>
        </authorList>
    </citation>
    <scope>PROTEIN SEQUENCE OF 54-68; 74-82; 361-374 AND 462-471</scope>
    <scope>IDENTIFICATION BY MASS SPECTROMETRY</scope>
    <source>
        <strain>C57BL/6J</strain>
        <strain>OF1</strain>
        <tissue>Brain</tissue>
        <tissue>Hippocampus</tissue>
    </source>
</reference>
<reference key="7">
    <citation type="journal article" date="2004" name="DNA Res.">
        <title>Prediction of the coding sequences of mouse homologues of KIAA gene: IV. The complete nucleotide sequences of 500 mouse KIAA-homologous cDNAs identified by screening of terminal sequences of cDNA clones randomly sampled from size-fractionated libraries.</title>
        <authorList>
            <person name="Okazaki N."/>
            <person name="Kikuno R."/>
            <person name="Ohara R."/>
            <person name="Inamoto S."/>
            <person name="Koseki H."/>
            <person name="Hiraoka S."/>
            <person name="Saga Y."/>
            <person name="Seino S."/>
            <person name="Nishimura M."/>
            <person name="Kaisho T."/>
            <person name="Hoshino K."/>
            <person name="Kitamura H."/>
            <person name="Nagase T."/>
            <person name="Ohara O."/>
            <person name="Koga H."/>
        </authorList>
    </citation>
    <scope>NUCLEOTIDE SEQUENCE [LARGE SCALE MRNA] OF 289-858</scope>
    <source>
        <tissue>Pancreatic islet</tissue>
    </source>
</reference>
<reference key="8">
    <citation type="journal article" date="1998" name="Biochem. Biophys. Res. Commun.">
        <title>Association of HSP105 with HSC70 in high molecular mass complexes in mouse FM3A cells.</title>
        <authorList>
            <person name="Hatayama T."/>
            <person name="Yasuda K."/>
            <person name="Yasuda K."/>
        </authorList>
    </citation>
    <scope>INTERACTION WITH HSPA8</scope>
</reference>
<reference key="9">
    <citation type="journal article" date="2000" name="Biochem. Biophys. Res. Commun.">
        <title>Phosphorylation of the 105-kDa heat shock proteins, HSP105alpha and HSP105beta, by casein kinase II.</title>
        <authorList>
            <person name="Ishihara K."/>
            <person name="Yasuda K."/>
            <person name="Hatayama T."/>
        </authorList>
    </citation>
    <scope>PHOSPHORYLATION</scope>
</reference>
<reference key="10">
    <citation type="journal article" date="2000" name="Brain Res.">
        <title>The distribution and localization of hsp110 in brain.</title>
        <authorList>
            <person name="Hylander B.L."/>
            <person name="Chen X."/>
            <person name="Graf P.C.F."/>
            <person name="Subjeck J.R."/>
        </authorList>
    </citation>
    <scope>TISSUE SPECIFICITY</scope>
    <scope>SUBCELLULAR LOCATION</scope>
</reference>
<reference key="11">
    <citation type="journal article" date="2003" name="Biochem. J.">
        <title>Protein kinase CK2 phosphorylates Hsp105 alpha at Ser509 and modulates its function.</title>
        <authorList>
            <person name="Ishihara K."/>
            <person name="Yamagishi N."/>
            <person name="Hatayama T."/>
        </authorList>
    </citation>
    <scope>PHOSPHORYLATION AT SER-509</scope>
</reference>
<reference key="12">
    <citation type="journal article" date="2003" name="FEBS Lett.">
        <title>Hsp105 but not Hsp70 family proteins suppress the aggregation of heat-denatured protein in the presence of ADP.</title>
        <authorList>
            <person name="Yamagishi N."/>
            <person name="Ishihara K."/>
            <person name="Saito Y."/>
            <person name="Hatayama T."/>
        </authorList>
    </citation>
    <scope>FUNCTION</scope>
</reference>
<reference key="13">
    <citation type="journal article" date="2004" name="J. Biol. Chem.">
        <title>Hsp105alpha suppresses Hsc70 chaperone activity by inhibiting Hsc70 ATPase activity.</title>
        <authorList>
            <person name="Yamagishi N."/>
            <person name="Ishihara K."/>
            <person name="Hatayama T."/>
        </authorList>
    </citation>
    <scope>INTERACTION WITH HSPA8</scope>
    <scope>FUNCTION</scope>
</reference>
<reference key="14">
    <citation type="journal article" date="2004" name="Mol. Cell. Proteomics">
        <title>Phosphoproteomic analysis of the developing mouse brain.</title>
        <authorList>
            <person name="Ballif B.A."/>
            <person name="Villen J."/>
            <person name="Beausoleil S.A."/>
            <person name="Schwartz D."/>
            <person name="Gygi S.P."/>
        </authorList>
    </citation>
    <scope>PHOSPHORYLATION [LARGE SCALE ANALYSIS] AT SER-558</scope>
    <scope>IDENTIFICATION BY MASS SPECTROMETRY [LARGE SCALE ANALYSIS]</scope>
    <source>
        <tissue>Embryonic brain</tissue>
    </source>
</reference>
<reference key="15">
    <citation type="journal article" date="2005" name="Cancer Sci.">
        <title>DNA vaccination of HSP105 leads to tumor rejection of colorectal cancer and melanoma in mice through activation of both CD4 T cells and CD8 T cells.</title>
        <authorList>
            <person name="Miyazaki M."/>
            <person name="Nakatsura T."/>
            <person name="Yokomine K."/>
            <person name="Senju S."/>
            <person name="Monji M."/>
            <person name="Hosaka S."/>
            <person name="Komori H."/>
            <person name="Yoshitake Y."/>
            <person name="Motomura Y."/>
            <person name="Minohara M."/>
            <person name="Kubo T."/>
            <person name="Ishihara K."/>
            <person name="Hatayama T."/>
            <person name="Ogawa M."/>
            <person name="Nishimura Y."/>
        </authorList>
    </citation>
    <scope>TISSUE SPECIFICITY</scope>
</reference>
<reference key="16">
    <citation type="journal article" date="2009" name="Immunity">
        <title>The phagosomal proteome in interferon-gamma-activated macrophages.</title>
        <authorList>
            <person name="Trost M."/>
            <person name="English L."/>
            <person name="Lemieux S."/>
            <person name="Courcelles M."/>
            <person name="Desjardins M."/>
            <person name="Thibault P."/>
        </authorList>
    </citation>
    <scope>PHOSPHORYLATION [LARGE SCALE ANALYSIS] AT SER-810</scope>
    <scope>IDENTIFICATION BY MASS SPECTROMETRY [LARGE SCALE ANALYSIS]</scope>
</reference>
<reference key="17">
    <citation type="journal article" date="2009" name="Mol. Cell. Proteomics">
        <title>Large scale localization of protein phosphorylation by use of electron capture dissociation mass spectrometry.</title>
        <authorList>
            <person name="Sweet S.M."/>
            <person name="Bailey C.M."/>
            <person name="Cunningham D.L."/>
            <person name="Heath J.K."/>
            <person name="Cooper H.J."/>
        </authorList>
    </citation>
    <scope>PHOSPHORYLATION [LARGE SCALE ANALYSIS] AT SER-810</scope>
    <scope>IDENTIFICATION BY MASS SPECTROMETRY [LARGE SCALE ANALYSIS]</scope>
    <source>
        <tissue>Embryonic fibroblast</tissue>
    </source>
</reference>
<reference key="18">
    <citation type="journal article" date="2010" name="Cell">
        <title>A tissue-specific atlas of mouse protein phosphorylation and expression.</title>
        <authorList>
            <person name="Huttlin E.L."/>
            <person name="Jedrychowski M.P."/>
            <person name="Elias J.E."/>
            <person name="Goswami T."/>
            <person name="Rad R."/>
            <person name="Beausoleil S.A."/>
            <person name="Villen J."/>
            <person name="Haas W."/>
            <person name="Sowa M.E."/>
            <person name="Gygi S.P."/>
        </authorList>
    </citation>
    <scope>PHOSPHORYLATION [LARGE SCALE ANALYSIS] AT SER-509 AND SER-510</scope>
    <scope>IDENTIFICATION BY MASS SPECTROMETRY [LARGE SCALE ANALYSIS]</scope>
    <source>
        <tissue>Brain</tissue>
        <tissue>Brown adipose tissue</tissue>
        <tissue>Heart</tissue>
        <tissue>Kidney</tissue>
        <tissue>Liver</tissue>
        <tissue>Lung</tissue>
        <tissue>Pancreas</tissue>
        <tissue>Spleen</tissue>
        <tissue>Testis</tissue>
    </source>
</reference>
<reference key="19">
    <citation type="journal article" date="2013" name="Mol. Cell">
        <title>SIRT5-mediated lysine desuccinylation impacts diverse metabolic pathways.</title>
        <authorList>
            <person name="Park J."/>
            <person name="Chen Y."/>
            <person name="Tishkoff D.X."/>
            <person name="Peng C."/>
            <person name="Tan M."/>
            <person name="Dai L."/>
            <person name="Xie Z."/>
            <person name="Zhang Y."/>
            <person name="Zwaans B.M."/>
            <person name="Skinner M.E."/>
            <person name="Lombard D.B."/>
            <person name="Zhao Y."/>
        </authorList>
    </citation>
    <scope>ACETYLATION [LARGE SCALE ANALYSIS] AT LYS-471</scope>
    <scope>IDENTIFICATION BY MASS SPECTROMETRY [LARGE SCALE ANALYSIS]</scope>
    <source>
        <tissue>Embryonic fibroblast</tissue>
    </source>
</reference>
<gene>
    <name type="primary">Hsph1</name>
    <name type="synonym">Hsp105</name>
    <name type="synonym">Hsp110</name>
    <name type="synonym">Kiaa0201</name>
</gene>